<dbReference type="EC" id="7.1.2.2"/>
<dbReference type="EMBL" id="AE004091">
    <property type="protein sequence ID" value="AAG04493.1"/>
    <property type="molecule type" value="Genomic_DNA"/>
</dbReference>
<dbReference type="PIR" id="A83509">
    <property type="entry name" value="A83509"/>
</dbReference>
<dbReference type="RefSeq" id="NP_249795.1">
    <property type="nucleotide sequence ID" value="NC_002516.2"/>
</dbReference>
<dbReference type="RefSeq" id="WP_003086458.1">
    <property type="nucleotide sequence ID" value="NZ_QZGE01000006.1"/>
</dbReference>
<dbReference type="SMR" id="Q9I4N1"/>
<dbReference type="FunCoup" id="Q9I4N1">
    <property type="interactions" value="202"/>
</dbReference>
<dbReference type="STRING" id="208964.PA1104"/>
<dbReference type="PaxDb" id="208964-PA1104"/>
<dbReference type="GeneID" id="882010"/>
<dbReference type="KEGG" id="pae:PA1104"/>
<dbReference type="PATRIC" id="fig|208964.12.peg.1143"/>
<dbReference type="PseudoCAP" id="PA1104"/>
<dbReference type="HOGENOM" id="CLU_022398_5_1_6"/>
<dbReference type="InParanoid" id="Q9I4N1"/>
<dbReference type="OrthoDB" id="9148544at2"/>
<dbReference type="PhylomeDB" id="Q9I4N1"/>
<dbReference type="BioCyc" id="PAER208964:G1FZ6-1127-MONOMER"/>
<dbReference type="PHI-base" id="PHI:6995"/>
<dbReference type="Proteomes" id="UP000002438">
    <property type="component" value="Chromosome"/>
</dbReference>
<dbReference type="GO" id="GO:0005737">
    <property type="term" value="C:cytoplasm"/>
    <property type="evidence" value="ECO:0007669"/>
    <property type="project" value="UniProtKB-SubCell"/>
</dbReference>
<dbReference type="GO" id="GO:0030257">
    <property type="term" value="C:type III protein secretion system complex"/>
    <property type="evidence" value="ECO:0007669"/>
    <property type="project" value="InterPro"/>
</dbReference>
<dbReference type="GO" id="GO:0005524">
    <property type="term" value="F:ATP binding"/>
    <property type="evidence" value="ECO:0007669"/>
    <property type="project" value="UniProtKB-KW"/>
</dbReference>
<dbReference type="GO" id="GO:0016887">
    <property type="term" value="F:ATP hydrolysis activity"/>
    <property type="evidence" value="ECO:0007669"/>
    <property type="project" value="InterPro"/>
</dbReference>
<dbReference type="GO" id="GO:0044780">
    <property type="term" value="P:bacterial-type flagellum assembly"/>
    <property type="evidence" value="ECO:0007669"/>
    <property type="project" value="InterPro"/>
</dbReference>
<dbReference type="GO" id="GO:0071973">
    <property type="term" value="P:bacterial-type flagellum-dependent cell motility"/>
    <property type="evidence" value="ECO:0007669"/>
    <property type="project" value="InterPro"/>
</dbReference>
<dbReference type="GO" id="GO:0030254">
    <property type="term" value="P:protein secretion by the type III secretion system"/>
    <property type="evidence" value="ECO:0007669"/>
    <property type="project" value="InterPro"/>
</dbReference>
<dbReference type="GO" id="GO:0015986">
    <property type="term" value="P:proton motive force-driven ATP synthesis"/>
    <property type="evidence" value="ECO:0007669"/>
    <property type="project" value="GOC"/>
</dbReference>
<dbReference type="GO" id="GO:1902600">
    <property type="term" value="P:proton transmembrane transport"/>
    <property type="evidence" value="ECO:0007669"/>
    <property type="project" value="UniProtKB-KW"/>
</dbReference>
<dbReference type="CDD" id="cd18114">
    <property type="entry name" value="ATP-synt_flagellum-secretory_path_III_C"/>
    <property type="match status" value="1"/>
</dbReference>
<dbReference type="CDD" id="cd18117">
    <property type="entry name" value="ATP-synt_flagellum-secretory_path_III_N"/>
    <property type="match status" value="1"/>
</dbReference>
<dbReference type="CDD" id="cd01136">
    <property type="entry name" value="ATPase_flagellum-secretory_path_III"/>
    <property type="match status" value="1"/>
</dbReference>
<dbReference type="FunFam" id="3.40.50.12240:FF:000002">
    <property type="entry name" value="Flagellum-specific ATP synthase FliI"/>
    <property type="match status" value="1"/>
</dbReference>
<dbReference type="Gene3D" id="3.40.50.12240">
    <property type="match status" value="1"/>
</dbReference>
<dbReference type="InterPro" id="IPR003593">
    <property type="entry name" value="AAA+_ATPase"/>
</dbReference>
<dbReference type="InterPro" id="IPR020003">
    <property type="entry name" value="ATPase_a/bsu_AS"/>
</dbReference>
<dbReference type="InterPro" id="IPR050053">
    <property type="entry name" value="ATPase_alpha/beta_chains"/>
</dbReference>
<dbReference type="InterPro" id="IPR000194">
    <property type="entry name" value="ATPase_F1/V1/A1_a/bsu_nucl-bd"/>
</dbReference>
<dbReference type="InterPro" id="IPR005714">
    <property type="entry name" value="ATPase_T3SS_FliI/YscN"/>
</dbReference>
<dbReference type="InterPro" id="IPR020005">
    <property type="entry name" value="FliI_clade1"/>
</dbReference>
<dbReference type="InterPro" id="IPR027417">
    <property type="entry name" value="P-loop_NTPase"/>
</dbReference>
<dbReference type="InterPro" id="IPR040627">
    <property type="entry name" value="T3SS_ATPase_C"/>
</dbReference>
<dbReference type="NCBIfam" id="TIGR03496">
    <property type="entry name" value="FliI_clade1"/>
    <property type="match status" value="1"/>
</dbReference>
<dbReference type="NCBIfam" id="TIGR01026">
    <property type="entry name" value="fliI_yscN"/>
    <property type="match status" value="1"/>
</dbReference>
<dbReference type="PANTHER" id="PTHR15184">
    <property type="entry name" value="ATP SYNTHASE"/>
    <property type="match status" value="1"/>
</dbReference>
<dbReference type="PANTHER" id="PTHR15184:SF81">
    <property type="entry name" value="FLAGELLUM-SPECIFIC ATP SYNTHASE"/>
    <property type="match status" value="1"/>
</dbReference>
<dbReference type="Pfam" id="PF00006">
    <property type="entry name" value="ATP-synt_ab"/>
    <property type="match status" value="1"/>
</dbReference>
<dbReference type="Pfam" id="PF18269">
    <property type="entry name" value="T3SS_ATPase_C"/>
    <property type="match status" value="1"/>
</dbReference>
<dbReference type="SMART" id="SM00382">
    <property type="entry name" value="AAA"/>
    <property type="match status" value="1"/>
</dbReference>
<dbReference type="SUPFAM" id="SSF52540">
    <property type="entry name" value="P-loop containing nucleoside triphosphate hydrolases"/>
    <property type="match status" value="1"/>
</dbReference>
<dbReference type="PROSITE" id="PS00152">
    <property type="entry name" value="ATPASE_ALPHA_BETA"/>
    <property type="match status" value="1"/>
</dbReference>
<evidence type="ECO:0000250" key="1"/>
<evidence type="ECO:0000255" key="2"/>
<evidence type="ECO:0000255" key="3">
    <source>
        <dbReference type="PROSITE-ProRule" id="PRU10106"/>
    </source>
</evidence>
<evidence type="ECO:0000305" key="4"/>
<gene>
    <name type="primary">fliI</name>
    <name type="ordered locus">PA1104</name>
</gene>
<feature type="chain" id="PRO_0000287750" description="Flagellum-specific ATP synthase">
    <location>
        <begin position="1"/>
        <end position="451"/>
    </location>
</feature>
<feature type="binding site" evidence="2">
    <location>
        <begin position="175"/>
        <end position="182"/>
    </location>
    <ligand>
        <name>ATP</name>
        <dbReference type="ChEBI" id="CHEBI:30616"/>
    </ligand>
</feature>
<sequence length="451" mass="48601">MRLERTSFARRLEGYTEAVSLPAQPVVEGRLLRMVGLTLEAEGLQAAVGSRCNVINESGYHPVQVEAEVMGFSGSKVYLMPVGSLAGIAPGARVVPLPDTGRLPMGMSMLGRVLDGAGRALDGKGGMRAEDWVPMDGPTINPLKRHPISEPLDVGIRSINGLLTVGRGQRLGLFAGTGVGKSVLLGMMTRFTRADIIVVGLIGERGREVKEFIDEILGEEGLKRSVVVASPADDAPLMRLRAAQYCTRIAEYFRDKGKNVLLLMDSLTRYAQAQREIALAIGEPPATKGYPPSVFAKLPKLVERAGNAEAGGGSITAFYTVLSEGDDQQDPIADAARGVLDGHFVLSRRLAEEGHYPAIDIEASISRVMPQVVEAEHLRDAQRFKQLWSRYQQSRDLISVGAYVAGGDPETDLAIARFPVMRQFLRQGLDESESLAESRARLASLLAGGQA</sequence>
<comment type="function">
    <text evidence="1">Probable catalytic subunit of a protein translocase for flagellum-specific export, or a proton translocase involved in local circuits at the flagellum.</text>
</comment>
<comment type="catalytic activity">
    <reaction evidence="3">
        <text>ATP + H2O + 4 H(+)(in) = ADP + phosphate + 5 H(+)(out)</text>
        <dbReference type="Rhea" id="RHEA:57720"/>
        <dbReference type="ChEBI" id="CHEBI:15377"/>
        <dbReference type="ChEBI" id="CHEBI:15378"/>
        <dbReference type="ChEBI" id="CHEBI:30616"/>
        <dbReference type="ChEBI" id="CHEBI:43474"/>
        <dbReference type="ChEBI" id="CHEBI:456216"/>
        <dbReference type="EC" id="7.1.2.2"/>
    </reaction>
</comment>
<comment type="subcellular location">
    <subcellularLocation>
        <location evidence="4">Cytoplasm</location>
    </subcellularLocation>
</comment>
<comment type="similarity">
    <text evidence="4">Belongs to the ATPase alpha/beta chains family.</text>
</comment>
<organism>
    <name type="scientific">Pseudomonas aeruginosa (strain ATCC 15692 / DSM 22644 / CIP 104116 / JCM 14847 / LMG 12228 / 1C / PRS 101 / PAO1)</name>
    <dbReference type="NCBI Taxonomy" id="208964"/>
    <lineage>
        <taxon>Bacteria</taxon>
        <taxon>Pseudomonadati</taxon>
        <taxon>Pseudomonadota</taxon>
        <taxon>Gammaproteobacteria</taxon>
        <taxon>Pseudomonadales</taxon>
        <taxon>Pseudomonadaceae</taxon>
        <taxon>Pseudomonas</taxon>
    </lineage>
</organism>
<name>FLII_PSEAE</name>
<proteinExistence type="inferred from homology"/>
<keyword id="KW-0066">ATP synthesis</keyword>
<keyword id="KW-0067">ATP-binding</keyword>
<keyword id="KW-1005">Bacterial flagellum biogenesis</keyword>
<keyword id="KW-1006">Bacterial flagellum protein export</keyword>
<keyword id="KW-0963">Cytoplasm</keyword>
<keyword id="KW-0375">Hydrogen ion transport</keyword>
<keyword id="KW-0406">Ion transport</keyword>
<keyword id="KW-0547">Nucleotide-binding</keyword>
<keyword id="KW-0653">Protein transport</keyword>
<keyword id="KW-1185">Reference proteome</keyword>
<keyword id="KW-1278">Translocase</keyword>
<keyword id="KW-0813">Transport</keyword>
<accession>Q9I4N1</accession>
<reference key="1">
    <citation type="journal article" date="2000" name="Nature">
        <title>Complete genome sequence of Pseudomonas aeruginosa PAO1, an opportunistic pathogen.</title>
        <authorList>
            <person name="Stover C.K."/>
            <person name="Pham X.-Q.T."/>
            <person name="Erwin A.L."/>
            <person name="Mizoguchi S.D."/>
            <person name="Warrener P."/>
            <person name="Hickey M.J."/>
            <person name="Brinkman F.S.L."/>
            <person name="Hufnagle W.O."/>
            <person name="Kowalik D.J."/>
            <person name="Lagrou M."/>
            <person name="Garber R.L."/>
            <person name="Goltry L."/>
            <person name="Tolentino E."/>
            <person name="Westbrock-Wadman S."/>
            <person name="Yuan Y."/>
            <person name="Brody L.L."/>
            <person name="Coulter S.N."/>
            <person name="Folger K.R."/>
            <person name="Kas A."/>
            <person name="Larbig K."/>
            <person name="Lim R.M."/>
            <person name="Smith K.A."/>
            <person name="Spencer D.H."/>
            <person name="Wong G.K.-S."/>
            <person name="Wu Z."/>
            <person name="Paulsen I.T."/>
            <person name="Reizer J."/>
            <person name="Saier M.H. Jr."/>
            <person name="Hancock R.E.W."/>
            <person name="Lory S."/>
            <person name="Olson M.V."/>
        </authorList>
    </citation>
    <scope>NUCLEOTIDE SEQUENCE [LARGE SCALE GENOMIC DNA]</scope>
    <source>
        <strain>ATCC 15692 / DSM 22644 / CIP 104116 / JCM 14847 / LMG 12228 / 1C / PRS 101 / PAO1</strain>
    </source>
</reference>
<protein>
    <recommendedName>
        <fullName>Flagellum-specific ATP synthase</fullName>
        <ecNumber>7.1.2.2</ecNumber>
    </recommendedName>
</protein>